<sequence>MSLSNKLAITDVDLKDKRVLIRVDFNVPLDADKKITNNQRIVGALPTIKYAIENGAKAVVLMSHLGRPDGKANPKYSLKPVATELEKLLSKSVIFAENCVGKETEEIVNKATGGQVILLENLRFHAEEEGSSKDAEGKKVKADKEKVEEFRKGLTALGDVYINDAFGTAHRAHSSMVGVDLPQKASGFLVKKELEYFAKALESPQRPFLAILGGAKVSDKIQLIDNLLPKVNSLIITGAMAFTFKKTLENVKIGNSLFDEAGSKIVGDIVEKAKKNNVKIVLPVDYVTADKFAADAKTGYATDADGIPDGYMGLDVGEKSVELYKKTIAEAKTILWNGPPGVFELEPFANATKKTLDAAVAAAQSGSIVIIGGGDTATVAAKYGAEAKLSHVSTGGGASLELLEGKVLPGVDALSSK</sequence>
<proteinExistence type="evidence at protein level"/>
<evidence type="ECO:0000250" key="1">
    <source>
        <dbReference type="UniProtKB" id="P00558"/>
    </source>
</evidence>
<evidence type="ECO:0000250" key="2">
    <source>
        <dbReference type="UniProtKB" id="P00560"/>
    </source>
</evidence>
<evidence type="ECO:0000250" key="3">
    <source>
        <dbReference type="UniProtKB" id="Q7SIB7"/>
    </source>
</evidence>
<evidence type="ECO:0000255" key="4">
    <source>
        <dbReference type="PIRSR" id="PIRSR000724-2"/>
    </source>
</evidence>
<evidence type="ECO:0000255" key="5">
    <source>
        <dbReference type="RuleBase" id="RU000532"/>
    </source>
</evidence>
<evidence type="ECO:0000255" key="6">
    <source>
        <dbReference type="RuleBase" id="RU000696"/>
    </source>
</evidence>
<evidence type="ECO:0000269" key="7">
    <source>
    </source>
</evidence>
<evidence type="ECO:0000303" key="8">
    <source>
    </source>
</evidence>
<evidence type="ECO:0000305" key="9"/>
<evidence type="ECO:0000305" key="10">
    <source>
    </source>
</evidence>
<evidence type="ECO:0000312" key="11">
    <source>
        <dbReference type="EMBL" id="QRD93909.1"/>
    </source>
</evidence>
<evidence type="ECO:0000312" key="12">
    <source>
        <dbReference type="Proteomes" id="UP000596276"/>
    </source>
</evidence>
<protein>
    <recommendedName>
        <fullName evidence="5">Phosphoglycerate kinase</fullName>
        <ecNumber evidence="2">2.7.2.3</ecNumber>
    </recommendedName>
</protein>
<organism evidence="12">
    <name type="scientific">Aspergillus flavus (strain ATCC 200026 / FGSC A1120 / IAM 13836 / NRRL 3357 / JCM 12722 / SRRC 167)</name>
    <dbReference type="NCBI Taxonomy" id="332952"/>
    <lineage>
        <taxon>Eukaryota</taxon>
        <taxon>Fungi</taxon>
        <taxon>Dikarya</taxon>
        <taxon>Ascomycota</taxon>
        <taxon>Pezizomycotina</taxon>
        <taxon>Eurotiomycetes</taxon>
        <taxon>Eurotiomycetidae</taxon>
        <taxon>Eurotiales</taxon>
        <taxon>Aspergillaceae</taxon>
        <taxon>Aspergillus</taxon>
        <taxon>Aspergillus subgen. Circumdati</taxon>
    </lineage>
</organism>
<comment type="function">
    <text evidence="1 2 7">Catalyzes one of the two ATP producing reactions in the glycolytic pathway via the reversible conversion of 1,3-diphosphoglycerate to 3-phosphoglycerate (By similarity). Both L- and D- forms of purine and pyrimidine nucleotides can be used as substrates, but the activity is much lower on pyrimidines (By similarity). Negatively regulates the biosynthesis of acetyl-CoA from pyruvate in the mitochondrion and consequently also attenuates aflatoxin production (PubMed:37754565).</text>
</comment>
<comment type="catalytic activity">
    <reaction evidence="2">
        <text>(2R)-3-phosphoglycerate + ATP = (2R)-3-phospho-glyceroyl phosphate + ADP</text>
        <dbReference type="Rhea" id="RHEA:14801"/>
        <dbReference type="ChEBI" id="CHEBI:30616"/>
        <dbReference type="ChEBI" id="CHEBI:57604"/>
        <dbReference type="ChEBI" id="CHEBI:58272"/>
        <dbReference type="ChEBI" id="CHEBI:456216"/>
        <dbReference type="EC" id="2.7.2.3"/>
    </reaction>
</comment>
<comment type="cofactor">
    <cofactor evidence="1">
        <name>Mg(2+)</name>
        <dbReference type="ChEBI" id="CHEBI:18420"/>
    </cofactor>
</comment>
<comment type="pathway">
    <text evidence="2">Carbohydrate degradation; glycolysis; pyruvate from D-glyceraldehyde 3-phosphate: step 2/5.</text>
</comment>
<comment type="subunit">
    <text evidence="6">Monomer.</text>
</comment>
<comment type="subcellular location">
    <subcellularLocation>
        <location evidence="7">Cytoplasm</location>
        <location evidence="7">Cytosol</location>
    </subcellularLocation>
    <subcellularLocation>
        <location evidence="7">Mitochondrion</location>
    </subcellularLocation>
    <text evidence="7">Localizes to the mitochondrion when phosphorylated.</text>
</comment>
<comment type="PTM">
    <text evidence="7">Dephosphorylated by PTC1 and PTC2 at Ser-203; the protein is cytosolic when dephosphorylated.</text>
</comment>
<comment type="disruption phenotype">
    <text evidence="7">Decreases cytosolic pyruvate levels and increases mitochondrial acetyl-CoA levels (PubMed:37754565). Increases production of aflatoxin and increases the mumber of cellular autophagic vesicles (PubMed:37754565).</text>
</comment>
<comment type="similarity">
    <text evidence="9">Belongs to the phosphoglycerate kinase family.</text>
</comment>
<feature type="chain" id="PRO_0000461659" description="Phosphoglycerate kinase">
    <location>
        <begin position="1"/>
        <end position="417"/>
    </location>
</feature>
<feature type="binding site" evidence="1">
    <location>
        <position position="23"/>
    </location>
    <ligand>
        <name>(2R)-3-phosphoglycerate</name>
        <dbReference type="ChEBI" id="CHEBI:58272"/>
    </ligand>
</feature>
<feature type="binding site" evidence="3">
    <location>
        <position position="24"/>
    </location>
    <ligand>
        <name>(2R)-3-phosphoglycerate</name>
        <dbReference type="ChEBI" id="CHEBI:58272"/>
    </ligand>
</feature>
<feature type="binding site" evidence="1">
    <location>
        <position position="25"/>
    </location>
    <ligand>
        <name>(2R)-3-phosphoglycerate</name>
        <dbReference type="ChEBI" id="CHEBI:58272"/>
    </ligand>
</feature>
<feature type="binding site" evidence="3">
    <location>
        <position position="26"/>
    </location>
    <ligand>
        <name>(2R)-3-phosphoglycerate</name>
        <dbReference type="ChEBI" id="CHEBI:58272"/>
    </ligand>
</feature>
<feature type="binding site" evidence="1">
    <location>
        <position position="39"/>
    </location>
    <ligand>
        <name>(2R)-3-phosphoglycerate</name>
        <dbReference type="ChEBI" id="CHEBI:58272"/>
    </ligand>
</feature>
<feature type="binding site" evidence="3">
    <location>
        <position position="40"/>
    </location>
    <ligand>
        <name>(2R)-3-phosphoglycerate</name>
        <dbReference type="ChEBI" id="CHEBI:58272"/>
    </ligand>
</feature>
<feature type="binding site" evidence="1">
    <location>
        <position position="63"/>
    </location>
    <ligand>
        <name>(2R)-3-phosphoglycerate</name>
        <dbReference type="ChEBI" id="CHEBI:58272"/>
    </ligand>
</feature>
<feature type="binding site" evidence="3">
    <location>
        <position position="64"/>
    </location>
    <ligand>
        <name>(2R)-3-phosphoglycerate</name>
        <dbReference type="ChEBI" id="CHEBI:58272"/>
    </ligand>
</feature>
<feature type="binding site" evidence="1">
    <location>
        <position position="66"/>
    </location>
    <ligand>
        <name>(2R)-3-phosphoglycerate</name>
        <dbReference type="ChEBI" id="CHEBI:58272"/>
    </ligand>
</feature>
<feature type="binding site" evidence="3">
    <location>
        <position position="67"/>
    </location>
    <ligand>
        <name>(2R)-3-phosphoglycerate</name>
        <dbReference type="ChEBI" id="CHEBI:58272"/>
    </ligand>
</feature>
<feature type="binding site" evidence="1">
    <location>
        <position position="122"/>
    </location>
    <ligand>
        <name>(2R)-3-phosphoglycerate</name>
        <dbReference type="ChEBI" id="CHEBI:58272"/>
    </ligand>
</feature>
<feature type="binding site" evidence="3">
    <location>
        <position position="123"/>
    </location>
    <ligand>
        <name>(2R)-3-phosphoglycerate</name>
        <dbReference type="ChEBI" id="CHEBI:58272"/>
    </ligand>
</feature>
<feature type="binding site" evidence="1">
    <location>
        <position position="170"/>
    </location>
    <ligand>
        <name>(2R)-3-phosphoglycerate</name>
        <dbReference type="ChEBI" id="CHEBI:58272"/>
    </ligand>
</feature>
<feature type="binding site" evidence="3">
    <location>
        <position position="171"/>
    </location>
    <ligand>
        <name>(2R)-3-phosphoglycerate</name>
        <dbReference type="ChEBI" id="CHEBI:58272"/>
    </ligand>
</feature>
<feature type="binding site" evidence="1">
    <location>
        <position position="214"/>
    </location>
    <ligand>
        <name>ADP</name>
        <dbReference type="ChEBI" id="CHEBI:456216"/>
    </ligand>
</feature>
<feature type="binding site" evidence="1">
    <location>
        <position position="214"/>
    </location>
    <ligand>
        <name>CDP</name>
        <dbReference type="ChEBI" id="CHEBI:58069"/>
    </ligand>
</feature>
<feature type="binding site" evidence="3">
    <location>
        <position position="215"/>
    </location>
    <ligand>
        <name>AMP</name>
        <dbReference type="ChEBI" id="CHEBI:456215"/>
    </ligand>
</feature>
<feature type="binding site" evidence="3">
    <location>
        <position position="215"/>
    </location>
    <ligand>
        <name>ATP</name>
        <dbReference type="ChEBI" id="CHEBI:30616"/>
    </ligand>
</feature>
<feature type="binding site" evidence="1">
    <location>
        <position position="215"/>
    </location>
    <ligand>
        <name>Mg(2+)</name>
        <dbReference type="ChEBI" id="CHEBI:18420"/>
    </ligand>
</feature>
<feature type="binding site" evidence="3">
    <location>
        <position position="216"/>
    </location>
    <ligand>
        <name>AMP</name>
        <dbReference type="ChEBI" id="CHEBI:456215"/>
    </ligand>
</feature>
<feature type="binding site" evidence="1">
    <location>
        <position position="219"/>
    </location>
    <ligand>
        <name>CDP</name>
        <dbReference type="ChEBI" id="CHEBI:58069"/>
    </ligand>
</feature>
<feature type="binding site" evidence="1">
    <location>
        <position position="219"/>
    </location>
    <ligand>
        <name>Mg(2+)</name>
        <dbReference type="ChEBI" id="CHEBI:18420"/>
    </ligand>
</feature>
<feature type="binding site" evidence="3">
    <location>
        <position position="220"/>
    </location>
    <ligand>
        <name>AMP</name>
        <dbReference type="ChEBI" id="CHEBI:456215"/>
    </ligand>
</feature>
<feature type="binding site" evidence="4">
    <location>
        <position position="220"/>
    </location>
    <ligand>
        <name>ATP</name>
        <dbReference type="ChEBI" id="CHEBI:30616"/>
    </ligand>
</feature>
<feature type="binding site" evidence="1">
    <location>
        <position position="238"/>
    </location>
    <ligand>
        <name>ADP</name>
        <dbReference type="ChEBI" id="CHEBI:456216"/>
    </ligand>
</feature>
<feature type="binding site" evidence="1">
    <location>
        <position position="238"/>
    </location>
    <ligand>
        <name>CDP</name>
        <dbReference type="ChEBI" id="CHEBI:58069"/>
    </ligand>
</feature>
<feature type="binding site" evidence="3">
    <location>
        <position position="239"/>
    </location>
    <ligand>
        <name>AMP</name>
        <dbReference type="ChEBI" id="CHEBI:456215"/>
    </ligand>
</feature>
<feature type="binding site" evidence="3">
    <location>
        <position position="239"/>
    </location>
    <ligand>
        <name>ATP</name>
        <dbReference type="ChEBI" id="CHEBI:30616"/>
    </ligand>
</feature>
<feature type="binding site" evidence="3">
    <location>
        <position position="313"/>
    </location>
    <ligand>
        <name>AMP</name>
        <dbReference type="ChEBI" id="CHEBI:456215"/>
    </ligand>
</feature>
<feature type="binding site" evidence="4">
    <location>
        <position position="313"/>
    </location>
    <ligand>
        <name>ATP</name>
        <dbReference type="ChEBI" id="CHEBI:30616"/>
    </ligand>
</feature>
<feature type="binding site" evidence="1">
    <location>
        <position position="338"/>
    </location>
    <ligand>
        <name>CDP</name>
        <dbReference type="ChEBI" id="CHEBI:58069"/>
    </ligand>
</feature>
<feature type="binding site" evidence="1">
    <location>
        <position position="343"/>
    </location>
    <ligand>
        <name>ADP</name>
        <dbReference type="ChEBI" id="CHEBI:456216"/>
    </ligand>
</feature>
<feature type="binding site" evidence="1">
    <location>
        <position position="343"/>
    </location>
    <ligand>
        <name>CDP</name>
        <dbReference type="ChEBI" id="CHEBI:58069"/>
    </ligand>
</feature>
<feature type="binding site" evidence="3">
    <location>
        <position position="344"/>
    </location>
    <ligand>
        <name>AMP</name>
        <dbReference type="ChEBI" id="CHEBI:456215"/>
    </ligand>
</feature>
<feature type="binding site" evidence="4">
    <location>
        <position position="344"/>
    </location>
    <ligand>
        <name>ATP</name>
        <dbReference type="ChEBI" id="CHEBI:30616"/>
    </ligand>
</feature>
<feature type="binding site" evidence="3">
    <location>
        <position position="375"/>
    </location>
    <ligand>
        <name>ATP</name>
        <dbReference type="ChEBI" id="CHEBI:30616"/>
    </ligand>
</feature>
<feature type="binding site" evidence="3">
    <location>
        <position position="375"/>
    </location>
    <ligand>
        <name>Mg(2+)</name>
        <dbReference type="ChEBI" id="CHEBI:18420"/>
    </ligand>
</feature>
<feature type="binding site" evidence="3">
    <location>
        <position position="376"/>
    </location>
    <ligand>
        <name>ATP</name>
        <dbReference type="ChEBI" id="CHEBI:30616"/>
    </ligand>
</feature>
<feature type="modified residue" description="Phosphoserine" evidence="10">
    <location>
        <position position="203"/>
    </location>
</feature>
<feature type="mutagenesis site" description="Decreases cytosolic pyruvate levels. Decreases mitochondrial localization and phosphorylation of the protein. Increases the mumber of cellular autophagic vesicles." evidence="7">
    <original>S</original>
    <variation>A</variation>
    <location>
        <position position="203"/>
    </location>
</feature>
<feature type="mutagenesis site" description="Increases cytosolic pyruvate levels and decreases mitochondrial acetyl-CoA levels. Increases mitochondrial localization of the protein and leads to decreased production of aflatoxin. Lowers the mumber of cellular autophagic vesicles." evidence="7">
    <original>S</original>
    <variation>D</variation>
    <location>
        <position position="203"/>
    </location>
</feature>
<reference evidence="12" key="1">
    <citation type="journal article" date="2021" name="G3 (Bethesda)">
        <title>Chromosome assembled and annotated genome sequence of Aspergillus flavus NRRL 3357.</title>
        <authorList>
            <person name="Skerker J.M."/>
            <person name="Pianalto K.M."/>
            <person name="Mondo S.J."/>
            <person name="Yang K."/>
            <person name="Arkin A.P."/>
            <person name="Keller N.P."/>
            <person name="Grigoriev I.V."/>
            <person name="Glass N.L."/>
        </authorList>
    </citation>
    <scope>NUCLEOTIDE SEQUENCE [LARGE SCALE GENOMIC DNA]</scope>
    <source>
        <strain evidence="12">ATCC 200026 / FGSC A1120 / IAM 13836 / NRRL 3357 / JCM 12722 / SRRC 167</strain>
    </source>
</reference>
<reference evidence="9" key="2">
    <citation type="journal article" date="2023" name="MBio">
        <title>PP2C phosphatases Ptc1 and Ptc2 dephosphorylate PGK1 to regulate autophagy and aflatoxin synthesis in the pathogenic fungus Aspergillus flavus.</title>
        <authorList>
            <person name="Zhu Z."/>
            <person name="Yang M."/>
            <person name="Yang G."/>
            <person name="Zhang B."/>
            <person name="Cao X."/>
            <person name="Yuan J."/>
            <person name="Ge F."/>
            <person name="Wang S."/>
        </authorList>
    </citation>
    <scope>FUNCTION</scope>
    <scope>SUBCELLULAR LOCATION</scope>
    <scope>DISRUPTION PHENOTYPE</scope>
    <scope>PHOSPHORYLATION AT SER-203</scope>
    <scope>MUTAGENESIS OF SER-203</scope>
</reference>
<gene>
    <name evidence="8" type="primary">pgk1</name>
    <name evidence="11" type="ORF">F9C07_8361</name>
</gene>
<keyword id="KW-0067">ATP-binding</keyword>
<keyword id="KW-0963">Cytoplasm</keyword>
<keyword id="KW-0324">Glycolysis</keyword>
<keyword id="KW-0418">Kinase</keyword>
<keyword id="KW-0460">Magnesium</keyword>
<keyword id="KW-0479">Metal-binding</keyword>
<keyword id="KW-0496">Mitochondrion</keyword>
<keyword id="KW-0547">Nucleotide-binding</keyword>
<keyword id="KW-0597">Phosphoprotein</keyword>
<keyword id="KW-1185">Reference proteome</keyword>
<keyword id="KW-0808">Transferase</keyword>
<accession>A0A7G5KET3</accession>
<accession>B8NIQ9</accession>
<dbReference type="EC" id="2.7.2.3" evidence="2"/>
<dbReference type="EMBL" id="CP044623">
    <property type="protein sequence ID" value="QRD93909.1"/>
    <property type="molecule type" value="Genomic_DNA"/>
</dbReference>
<dbReference type="RefSeq" id="XP_002380496.1">
    <property type="nucleotide sequence ID" value="XM_002380455.1"/>
</dbReference>
<dbReference type="EnsemblFungi" id="EED50115">
    <property type="protein sequence ID" value="EED50115"/>
    <property type="gene ID" value="AFLA_069370"/>
</dbReference>
<dbReference type="VEuPathDB" id="FungiDB:AFLA_008875"/>
<dbReference type="VEuPathDB" id="FungiDB:F9C07_8361"/>
<dbReference type="OMA" id="DMIFDIG"/>
<dbReference type="UniPathway" id="UPA00109">
    <property type="reaction ID" value="UER00185"/>
</dbReference>
<dbReference type="Proteomes" id="UP000596276">
    <property type="component" value="Chromosome 6"/>
</dbReference>
<dbReference type="GO" id="GO:0005829">
    <property type="term" value="C:cytosol"/>
    <property type="evidence" value="ECO:0000314"/>
    <property type="project" value="UniProtKB"/>
</dbReference>
<dbReference type="GO" id="GO:0005739">
    <property type="term" value="C:mitochondrion"/>
    <property type="evidence" value="ECO:0000314"/>
    <property type="project" value="UniProtKB"/>
</dbReference>
<dbReference type="GO" id="GO:0043531">
    <property type="term" value="F:ADP binding"/>
    <property type="evidence" value="ECO:0007669"/>
    <property type="project" value="TreeGrafter"/>
</dbReference>
<dbReference type="GO" id="GO:0005524">
    <property type="term" value="F:ATP binding"/>
    <property type="evidence" value="ECO:0007669"/>
    <property type="project" value="UniProtKB-KW"/>
</dbReference>
<dbReference type="GO" id="GO:0046872">
    <property type="term" value="F:metal ion binding"/>
    <property type="evidence" value="ECO:0007669"/>
    <property type="project" value="UniProtKB-KW"/>
</dbReference>
<dbReference type="GO" id="GO:0004618">
    <property type="term" value="F:phosphoglycerate kinase activity"/>
    <property type="evidence" value="ECO:0007669"/>
    <property type="project" value="UniProtKB-EC"/>
</dbReference>
<dbReference type="GO" id="GO:0006094">
    <property type="term" value="P:gluconeogenesis"/>
    <property type="evidence" value="ECO:0007669"/>
    <property type="project" value="EnsemblFungi"/>
</dbReference>
<dbReference type="GO" id="GO:0006096">
    <property type="term" value="P:glycolytic process"/>
    <property type="evidence" value="ECO:0007669"/>
    <property type="project" value="UniProtKB-KW"/>
</dbReference>
<dbReference type="GO" id="GO:0160218">
    <property type="term" value="P:negative regulation of acetyl-CoA biosynthetic process from pyruvate"/>
    <property type="evidence" value="ECO:0000315"/>
    <property type="project" value="UniProtKB"/>
</dbReference>
<dbReference type="CDD" id="cd00318">
    <property type="entry name" value="Phosphoglycerate_kinase"/>
    <property type="match status" value="1"/>
</dbReference>
<dbReference type="FunFam" id="3.40.50.1260:FF:000019">
    <property type="entry name" value="Phosphoglycerate kinase 1"/>
    <property type="match status" value="1"/>
</dbReference>
<dbReference type="FunFam" id="3.40.50.1260:FF:000031">
    <property type="entry name" value="Phosphoglycerate kinase 1"/>
    <property type="match status" value="1"/>
</dbReference>
<dbReference type="Gene3D" id="3.40.50.1260">
    <property type="entry name" value="Phosphoglycerate kinase, N-terminal domain"/>
    <property type="match status" value="3"/>
</dbReference>
<dbReference type="HAMAP" id="MF_00145">
    <property type="entry name" value="Phosphoglyc_kinase"/>
    <property type="match status" value="1"/>
</dbReference>
<dbReference type="InterPro" id="IPR001576">
    <property type="entry name" value="Phosphoglycerate_kinase"/>
</dbReference>
<dbReference type="InterPro" id="IPR015911">
    <property type="entry name" value="Phosphoglycerate_kinase_CS"/>
</dbReference>
<dbReference type="InterPro" id="IPR015824">
    <property type="entry name" value="Phosphoglycerate_kinase_N"/>
</dbReference>
<dbReference type="InterPro" id="IPR036043">
    <property type="entry name" value="Phosphoglycerate_kinase_sf"/>
</dbReference>
<dbReference type="PANTHER" id="PTHR11406">
    <property type="entry name" value="PHOSPHOGLYCERATE KINASE"/>
    <property type="match status" value="1"/>
</dbReference>
<dbReference type="PANTHER" id="PTHR11406:SF0">
    <property type="entry name" value="PHOSPHOGLYCERATE KINASE"/>
    <property type="match status" value="1"/>
</dbReference>
<dbReference type="Pfam" id="PF00162">
    <property type="entry name" value="PGK"/>
    <property type="match status" value="1"/>
</dbReference>
<dbReference type="PIRSF" id="PIRSF000724">
    <property type="entry name" value="Pgk"/>
    <property type="match status" value="1"/>
</dbReference>
<dbReference type="PRINTS" id="PR00477">
    <property type="entry name" value="PHGLYCKINASE"/>
</dbReference>
<dbReference type="SUPFAM" id="SSF53748">
    <property type="entry name" value="Phosphoglycerate kinase"/>
    <property type="match status" value="1"/>
</dbReference>
<dbReference type="PROSITE" id="PS00111">
    <property type="entry name" value="PGLYCERATE_KINASE"/>
    <property type="match status" value="1"/>
</dbReference>
<name>PGK1_ASPFN</name>